<reference key="1">
    <citation type="journal article" date="2009" name="PLoS ONE">
        <title>Salmonella paratyphi C: genetic divergence from Salmonella choleraesuis and pathogenic convergence with Salmonella typhi.</title>
        <authorList>
            <person name="Liu W.-Q."/>
            <person name="Feng Y."/>
            <person name="Wang Y."/>
            <person name="Zou Q.-H."/>
            <person name="Chen F."/>
            <person name="Guo J.-T."/>
            <person name="Peng Y.-H."/>
            <person name="Jin Y."/>
            <person name="Li Y.-G."/>
            <person name="Hu S.-N."/>
            <person name="Johnston R.N."/>
            <person name="Liu G.-R."/>
            <person name="Liu S.-L."/>
        </authorList>
    </citation>
    <scope>NUCLEOTIDE SEQUENCE [LARGE SCALE GENOMIC DNA]</scope>
    <source>
        <strain>RKS4594</strain>
    </source>
</reference>
<feature type="chain" id="PRO_1000164396" description="Succinylornithine transaminase">
    <location>
        <begin position="1"/>
        <end position="408"/>
    </location>
</feature>
<feature type="modified residue" description="N6-(pyridoxal phosphate)lysine" evidence="1">
    <location>
        <position position="252"/>
    </location>
</feature>
<keyword id="KW-0032">Aminotransferase</keyword>
<keyword id="KW-0056">Arginine metabolism</keyword>
<keyword id="KW-0663">Pyridoxal phosphate</keyword>
<keyword id="KW-0808">Transferase</keyword>
<comment type="function">
    <text evidence="1">Catalyzes the transamination of N(2)-succinylornithine and alpha-ketoglutarate into N(2)-succinylglutamate semialdehyde and glutamate. Can also act as an acetylornithine aminotransferase.</text>
</comment>
<comment type="catalytic activity">
    <reaction evidence="1">
        <text>N(2)-succinyl-L-ornithine + 2-oxoglutarate = N-succinyl-L-glutamate 5-semialdehyde + L-glutamate</text>
        <dbReference type="Rhea" id="RHEA:16953"/>
        <dbReference type="ChEBI" id="CHEBI:16810"/>
        <dbReference type="ChEBI" id="CHEBI:29985"/>
        <dbReference type="ChEBI" id="CHEBI:58514"/>
        <dbReference type="ChEBI" id="CHEBI:58520"/>
        <dbReference type="EC" id="2.6.1.81"/>
    </reaction>
</comment>
<comment type="cofactor">
    <cofactor evidence="1">
        <name>pyridoxal 5'-phosphate</name>
        <dbReference type="ChEBI" id="CHEBI:597326"/>
    </cofactor>
</comment>
<comment type="pathway">
    <text evidence="1">Amino-acid degradation; L-arginine degradation via AST pathway; L-glutamate and succinate from L-arginine: step 3/5.</text>
</comment>
<comment type="similarity">
    <text evidence="1">Belongs to the class-III pyridoxal-phosphate-dependent aminotransferase family. AstC subfamily.</text>
</comment>
<evidence type="ECO:0000255" key="1">
    <source>
        <dbReference type="HAMAP-Rule" id="MF_01173"/>
    </source>
</evidence>
<sequence>MSLSVTRENFDEWMVPVYVPAPFIPVRGEGSRLWDQQGKEYIDFAGGIAVNALGHAHPALREALNEQANRFWHTGNGYTNEPALRLAKKLIDATFAERVFFCNSGAEANEAALKLARKYAHDRVGNHKSGIVAFKNAFHGRTLFTVSAGGQPTYSQDFAPLPPDIRHAAYNDLNSASALIDDNTCAVIVEPVQGEGGVIPATKAFLQGLRELCDRHQALLIFDEVQTGVGRTGELYAYMHYGVTPDILTTAKALGGGFPIGAMLTTQDYASVMTPGTHGTTYGGNPLATAVAGKVLDIINTPEMQNGVRQRHDAFIERLNTINVRFGMFSEIRGLGLLLGCVLQTEFAGKAKLIAQEAAKAGVMVLIAGGDVVRFAPALNVSDEEIATGLDRFALACERLQTGGASCG</sequence>
<accession>C0Q6X9</accession>
<protein>
    <recommendedName>
        <fullName evidence="1">Succinylornithine transaminase</fullName>
        <ecNumber evidence="1">2.6.1.81</ecNumber>
    </recommendedName>
    <alternativeName>
        <fullName evidence="1">Succinylornithine aminotransferase</fullName>
    </alternativeName>
</protein>
<dbReference type="EC" id="2.6.1.81" evidence="1"/>
<dbReference type="EMBL" id="CP000857">
    <property type="protein sequence ID" value="ACN46537.1"/>
    <property type="molecule type" value="Genomic_DNA"/>
</dbReference>
<dbReference type="RefSeq" id="WP_000059506.1">
    <property type="nucleotide sequence ID" value="NC_012125.1"/>
</dbReference>
<dbReference type="SMR" id="C0Q6X9"/>
<dbReference type="KEGG" id="sei:SPC_2428"/>
<dbReference type="HOGENOM" id="CLU_016922_10_1_6"/>
<dbReference type="UniPathway" id="UPA00185">
    <property type="reaction ID" value="UER00281"/>
</dbReference>
<dbReference type="Proteomes" id="UP000001599">
    <property type="component" value="Chromosome"/>
</dbReference>
<dbReference type="GO" id="GO:0042802">
    <property type="term" value="F:identical protein binding"/>
    <property type="evidence" value="ECO:0007669"/>
    <property type="project" value="TreeGrafter"/>
</dbReference>
<dbReference type="GO" id="GO:0030170">
    <property type="term" value="F:pyridoxal phosphate binding"/>
    <property type="evidence" value="ECO:0007669"/>
    <property type="project" value="UniProtKB-UniRule"/>
</dbReference>
<dbReference type="GO" id="GO:0043825">
    <property type="term" value="F:succinylornithine transaminase activity"/>
    <property type="evidence" value="ECO:0007669"/>
    <property type="project" value="UniProtKB-EC"/>
</dbReference>
<dbReference type="GO" id="GO:1901607">
    <property type="term" value="P:alpha-amino acid biosynthetic process"/>
    <property type="evidence" value="ECO:0007669"/>
    <property type="project" value="UniProtKB-ARBA"/>
</dbReference>
<dbReference type="GO" id="GO:0019544">
    <property type="term" value="P:arginine catabolic process to glutamate"/>
    <property type="evidence" value="ECO:0007669"/>
    <property type="project" value="UniProtKB-UniRule"/>
</dbReference>
<dbReference type="GO" id="GO:0019545">
    <property type="term" value="P:arginine catabolic process to succinate"/>
    <property type="evidence" value="ECO:0007669"/>
    <property type="project" value="UniProtKB-UniRule"/>
</dbReference>
<dbReference type="GO" id="GO:0006593">
    <property type="term" value="P:ornithine catabolic process"/>
    <property type="evidence" value="ECO:0007669"/>
    <property type="project" value="InterPro"/>
</dbReference>
<dbReference type="CDD" id="cd00610">
    <property type="entry name" value="OAT_like"/>
    <property type="match status" value="1"/>
</dbReference>
<dbReference type="FunFam" id="3.40.640.10:FF:000004">
    <property type="entry name" value="Acetylornithine aminotransferase"/>
    <property type="match status" value="1"/>
</dbReference>
<dbReference type="Gene3D" id="3.90.1150.10">
    <property type="entry name" value="Aspartate Aminotransferase, domain 1"/>
    <property type="match status" value="1"/>
</dbReference>
<dbReference type="Gene3D" id="3.40.640.10">
    <property type="entry name" value="Type I PLP-dependent aspartate aminotransferase-like (Major domain)"/>
    <property type="match status" value="1"/>
</dbReference>
<dbReference type="HAMAP" id="MF_01107">
    <property type="entry name" value="ArgD_aminotrans_3"/>
    <property type="match status" value="1"/>
</dbReference>
<dbReference type="HAMAP" id="MF_01173">
    <property type="entry name" value="AstC_aminotrans_3"/>
    <property type="match status" value="1"/>
</dbReference>
<dbReference type="InterPro" id="IPR017652">
    <property type="entry name" value="Ac/SucOrn_transaminase_bac"/>
</dbReference>
<dbReference type="InterPro" id="IPR004636">
    <property type="entry name" value="AcOrn/SuccOrn_fam"/>
</dbReference>
<dbReference type="InterPro" id="IPR005814">
    <property type="entry name" value="Aminotrans_3"/>
</dbReference>
<dbReference type="InterPro" id="IPR049704">
    <property type="entry name" value="Aminotrans_3_PPA_site"/>
</dbReference>
<dbReference type="InterPro" id="IPR050103">
    <property type="entry name" value="Class-III_PLP-dep_AT"/>
</dbReference>
<dbReference type="InterPro" id="IPR015424">
    <property type="entry name" value="PyrdxlP-dep_Trfase"/>
</dbReference>
<dbReference type="InterPro" id="IPR015421">
    <property type="entry name" value="PyrdxlP-dep_Trfase_major"/>
</dbReference>
<dbReference type="InterPro" id="IPR015422">
    <property type="entry name" value="PyrdxlP-dep_Trfase_small"/>
</dbReference>
<dbReference type="InterPro" id="IPR001763">
    <property type="entry name" value="Rhodanese-like_dom"/>
</dbReference>
<dbReference type="InterPro" id="IPR026330">
    <property type="entry name" value="SOAT"/>
</dbReference>
<dbReference type="NCBIfam" id="TIGR03246">
    <property type="entry name" value="arg_catab_astC"/>
    <property type="match status" value="1"/>
</dbReference>
<dbReference type="NCBIfam" id="TIGR00707">
    <property type="entry name" value="argD"/>
    <property type="match status" value="1"/>
</dbReference>
<dbReference type="NCBIfam" id="NF002325">
    <property type="entry name" value="PRK01278.1"/>
    <property type="match status" value="1"/>
</dbReference>
<dbReference type="NCBIfam" id="NF003468">
    <property type="entry name" value="PRK05093.1"/>
    <property type="match status" value="1"/>
</dbReference>
<dbReference type="NCBIfam" id="NF009047">
    <property type="entry name" value="PRK12381.1"/>
    <property type="match status" value="1"/>
</dbReference>
<dbReference type="PANTHER" id="PTHR11986">
    <property type="entry name" value="AMINOTRANSFERASE CLASS III"/>
    <property type="match status" value="1"/>
</dbReference>
<dbReference type="PANTHER" id="PTHR11986:SF113">
    <property type="entry name" value="SUCCINYLORNITHINE TRANSAMINASE"/>
    <property type="match status" value="1"/>
</dbReference>
<dbReference type="Pfam" id="PF00202">
    <property type="entry name" value="Aminotran_3"/>
    <property type="match status" value="1"/>
</dbReference>
<dbReference type="PIRSF" id="PIRSF000521">
    <property type="entry name" value="Transaminase_4ab_Lys_Orn"/>
    <property type="match status" value="1"/>
</dbReference>
<dbReference type="SUPFAM" id="SSF53383">
    <property type="entry name" value="PLP-dependent transferases"/>
    <property type="match status" value="1"/>
</dbReference>
<dbReference type="PROSITE" id="PS00600">
    <property type="entry name" value="AA_TRANSFER_CLASS_3"/>
    <property type="match status" value="1"/>
</dbReference>
<name>ASTC_SALPC</name>
<gene>
    <name evidence="1" type="primary">astC</name>
    <name evidence="1" type="synonym">argM</name>
    <name type="ordered locus">SPC_2428</name>
</gene>
<proteinExistence type="inferred from homology"/>
<organism>
    <name type="scientific">Salmonella paratyphi C (strain RKS4594)</name>
    <dbReference type="NCBI Taxonomy" id="476213"/>
    <lineage>
        <taxon>Bacteria</taxon>
        <taxon>Pseudomonadati</taxon>
        <taxon>Pseudomonadota</taxon>
        <taxon>Gammaproteobacteria</taxon>
        <taxon>Enterobacterales</taxon>
        <taxon>Enterobacteriaceae</taxon>
        <taxon>Salmonella</taxon>
    </lineage>
</organism>